<protein>
    <recommendedName>
        <fullName>Cholinesterase</fullName>
        <ecNumber>3.1.1.8</ecNumber>
    </recommendedName>
    <alternativeName>
        <fullName>Acylcholine acylhydrolase</fullName>
    </alternativeName>
    <alternativeName>
        <fullName>Butyrylcholine esterase</fullName>
    </alternativeName>
    <alternativeName>
        <fullName>Choline esterase II</fullName>
    </alternativeName>
    <alternativeName>
        <fullName>Pseudocholinesterase</fullName>
    </alternativeName>
</protein>
<gene>
    <name type="primary">BCHE</name>
</gene>
<keyword id="KW-1015">Disulfide bond</keyword>
<keyword id="KW-0325">Glycoprotein</keyword>
<keyword id="KW-0378">Hydrolase</keyword>
<keyword id="KW-0597">Phosphoprotein</keyword>
<keyword id="KW-1185">Reference proteome</keyword>
<keyword id="KW-0964">Secreted</keyword>
<keyword id="KW-0719">Serine esterase</keyword>
<reference key="1">
    <citation type="journal article" date="1991" name="J. Biol. Chem.">
        <title>Use of the polymerase chain reaction for homology probing of butyrylcholinesterase from several vertebrates.</title>
        <authorList>
            <person name="Arpagaus M."/>
            <person name="Chatonnet A."/>
            <person name="Masson P."/>
            <person name="Newton M."/>
            <person name="Vaughan T.A."/>
            <person name="Bartels C.F."/>
            <person name="Nogueira C.P."/>
            <person name="la Du B.N."/>
            <person name="Lockridge O."/>
        </authorList>
    </citation>
    <scope>NUCLEOTIDE SEQUENCE [GENOMIC DNA]</scope>
    <source>
        <tissue>Liver</tissue>
    </source>
</reference>
<comment type="function">
    <text evidence="1">Esterase with broad substrate specificity. Contributes to the inactivation of the neurotransmitter acetylcholine. Can degrade neurotoxic organophosphate esters (By similarity).</text>
</comment>
<comment type="catalytic activity">
    <reaction>
        <text>an acylcholine + H2O = a carboxylate + choline + H(+)</text>
        <dbReference type="Rhea" id="RHEA:21964"/>
        <dbReference type="ChEBI" id="CHEBI:15354"/>
        <dbReference type="ChEBI" id="CHEBI:15377"/>
        <dbReference type="ChEBI" id="CHEBI:15378"/>
        <dbReference type="ChEBI" id="CHEBI:29067"/>
        <dbReference type="ChEBI" id="CHEBI:35287"/>
        <dbReference type="EC" id="3.1.1.8"/>
    </reaction>
</comment>
<comment type="subunit">
    <text evidence="1">Homotetramer; disulfide-linked. Dimer of dimers (By similarity).</text>
</comment>
<comment type="subcellular location">
    <subcellularLocation>
        <location evidence="1">Secreted</location>
    </subcellularLocation>
</comment>
<comment type="tissue specificity">
    <text>Present in most cells except erythrocytes.</text>
</comment>
<comment type="similarity">
    <text evidence="5">Belongs to the type-B carboxylesterase/lipase family.</text>
</comment>
<evidence type="ECO:0000250" key="1"/>
<evidence type="ECO:0000250" key="2">
    <source>
        <dbReference type="UniProtKB" id="P06276"/>
    </source>
</evidence>
<evidence type="ECO:0000255" key="3"/>
<evidence type="ECO:0000255" key="4">
    <source>
        <dbReference type="PROSITE-ProRule" id="PRU10039"/>
    </source>
</evidence>
<evidence type="ECO:0000305" key="5"/>
<proteinExistence type="evidence at transcript level"/>
<name>CHLE_PIG</name>
<dbReference type="EC" id="3.1.1.8"/>
<dbReference type="EMBL" id="M62778">
    <property type="protein sequence ID" value="AAA31005.1"/>
    <property type="molecule type" value="Genomic_DNA"/>
</dbReference>
<dbReference type="PIR" id="D39768">
    <property type="entry name" value="D39768"/>
</dbReference>
<dbReference type="SMR" id="P32752"/>
<dbReference type="ESTHER" id="pig-BCHE">
    <property type="family name" value="BCHE"/>
</dbReference>
<dbReference type="MEROPS" id="S09.980"/>
<dbReference type="GlyCosmos" id="P32752">
    <property type="glycosylation" value="1 site, No reported glycans"/>
</dbReference>
<dbReference type="GlyGen" id="P32752">
    <property type="glycosylation" value="1 site"/>
</dbReference>
<dbReference type="PaxDb" id="9823-ENSSSCP00000026382"/>
<dbReference type="eggNOG" id="KOG4389">
    <property type="taxonomic scope" value="Eukaryota"/>
</dbReference>
<dbReference type="HOGENOM" id="CLU_006586_13_0_1"/>
<dbReference type="InParanoid" id="P32752"/>
<dbReference type="BRENDA" id="3.1.1.8">
    <property type="organism ID" value="6170"/>
</dbReference>
<dbReference type="Proteomes" id="UP000008227">
    <property type="component" value="Unplaced"/>
</dbReference>
<dbReference type="Proteomes" id="UP000314985">
    <property type="component" value="Unplaced"/>
</dbReference>
<dbReference type="Proteomes" id="UP000694570">
    <property type="component" value="Unplaced"/>
</dbReference>
<dbReference type="Proteomes" id="UP000694571">
    <property type="component" value="Unplaced"/>
</dbReference>
<dbReference type="Proteomes" id="UP000694720">
    <property type="component" value="Unplaced"/>
</dbReference>
<dbReference type="Proteomes" id="UP000694722">
    <property type="component" value="Unplaced"/>
</dbReference>
<dbReference type="Proteomes" id="UP000694723">
    <property type="component" value="Unplaced"/>
</dbReference>
<dbReference type="Proteomes" id="UP000694724">
    <property type="component" value="Unplaced"/>
</dbReference>
<dbReference type="Proteomes" id="UP000694725">
    <property type="component" value="Unplaced"/>
</dbReference>
<dbReference type="Proteomes" id="UP000694726">
    <property type="component" value="Unplaced"/>
</dbReference>
<dbReference type="Proteomes" id="UP000694727">
    <property type="component" value="Unplaced"/>
</dbReference>
<dbReference type="Proteomes" id="UP000694728">
    <property type="component" value="Unplaced"/>
</dbReference>
<dbReference type="GO" id="GO:0005576">
    <property type="term" value="C:extracellular region"/>
    <property type="evidence" value="ECO:0007669"/>
    <property type="project" value="UniProtKB-SubCell"/>
</dbReference>
<dbReference type="GO" id="GO:0003990">
    <property type="term" value="F:acetylcholinesterase activity"/>
    <property type="evidence" value="ECO:0000250"/>
    <property type="project" value="UniProtKB"/>
</dbReference>
<dbReference type="GO" id="GO:0004104">
    <property type="term" value="F:cholinesterase activity"/>
    <property type="evidence" value="ECO:0000250"/>
    <property type="project" value="UniProtKB"/>
</dbReference>
<dbReference type="FunFam" id="3.40.50.1820:FF:000598">
    <property type="entry name" value="Cholinesterase"/>
    <property type="match status" value="1"/>
</dbReference>
<dbReference type="Gene3D" id="3.40.50.1820">
    <property type="entry name" value="alpha/beta hydrolase"/>
    <property type="match status" value="1"/>
</dbReference>
<dbReference type="InterPro" id="IPR029058">
    <property type="entry name" value="AB_hydrolase_fold"/>
</dbReference>
<dbReference type="InterPro" id="IPR050654">
    <property type="entry name" value="AChE-related_enzymes"/>
</dbReference>
<dbReference type="InterPro" id="IPR002018">
    <property type="entry name" value="CarbesteraseB"/>
</dbReference>
<dbReference type="InterPro" id="IPR019826">
    <property type="entry name" value="Carboxylesterase_B_AS"/>
</dbReference>
<dbReference type="InterPro" id="IPR019819">
    <property type="entry name" value="Carboxylesterase_B_CS"/>
</dbReference>
<dbReference type="InterPro" id="IPR000997">
    <property type="entry name" value="Cholinesterase"/>
</dbReference>
<dbReference type="PANTHER" id="PTHR43918">
    <property type="entry name" value="ACETYLCHOLINESTERASE"/>
    <property type="match status" value="1"/>
</dbReference>
<dbReference type="PANTHER" id="PTHR43918:SF5">
    <property type="entry name" value="CHOLINESTERASE"/>
    <property type="match status" value="1"/>
</dbReference>
<dbReference type="Pfam" id="PF00135">
    <property type="entry name" value="COesterase"/>
    <property type="match status" value="1"/>
</dbReference>
<dbReference type="PRINTS" id="PR00878">
    <property type="entry name" value="CHOLNESTRASE"/>
</dbReference>
<dbReference type="SUPFAM" id="SSF53474">
    <property type="entry name" value="alpha/beta-Hydrolases"/>
    <property type="match status" value="1"/>
</dbReference>
<dbReference type="PROSITE" id="PS00122">
    <property type="entry name" value="CARBOXYLESTERASE_B_1"/>
    <property type="match status" value="1"/>
</dbReference>
<dbReference type="PROSITE" id="PS00941">
    <property type="entry name" value="CARBOXYLESTERASE_B_2"/>
    <property type="match status" value="1"/>
</dbReference>
<feature type="chain" id="PRO_0000070287" description="Cholinesterase">
    <location>
        <begin position="1" status="less than"/>
        <end position="141" status="greater than"/>
    </location>
</feature>
<feature type="active site" description="Acyl-ester intermediate" evidence="4">
    <location>
        <position position="131"/>
    </location>
</feature>
<feature type="binding site" evidence="1">
    <location>
        <begin position="49"/>
        <end position="50"/>
    </location>
    <ligand>
        <name>substrate</name>
    </ligand>
</feature>
<feature type="modified residue" description="Phosphoserine" evidence="2">
    <location>
        <position position="131"/>
    </location>
</feature>
<feature type="glycosylation site" description="N-linked (GlcNAc...) asparagine" evidence="3">
    <location>
        <position position="39"/>
    </location>
</feature>
<feature type="non-terminal residue">
    <location>
        <position position="1"/>
    </location>
</feature>
<feature type="non-terminal residue">
    <location>
        <position position="141"/>
    </location>
</feature>
<sequence>NTDQSFPGFVGSEMWNPNTELSEDCLYLNVWIPAPKPKNATVMIWIYGGGFQTGTSSLHVYDGKFLSRVERVIVVSMNYRVGALGFLALPGNPEAPGNMGLFDQQLALQWVQKNIAAFGGNPKSVTLFGESAGAVSVSLHL</sequence>
<organism>
    <name type="scientific">Sus scrofa</name>
    <name type="common">Pig</name>
    <dbReference type="NCBI Taxonomy" id="9823"/>
    <lineage>
        <taxon>Eukaryota</taxon>
        <taxon>Metazoa</taxon>
        <taxon>Chordata</taxon>
        <taxon>Craniata</taxon>
        <taxon>Vertebrata</taxon>
        <taxon>Euteleostomi</taxon>
        <taxon>Mammalia</taxon>
        <taxon>Eutheria</taxon>
        <taxon>Laurasiatheria</taxon>
        <taxon>Artiodactyla</taxon>
        <taxon>Suina</taxon>
        <taxon>Suidae</taxon>
        <taxon>Sus</taxon>
    </lineage>
</organism>
<accession>P32752</accession>